<accession>A3PID0</accession>
<feature type="chain" id="PRO_1000025825" description="Chaperonin GroEL">
    <location>
        <begin position="1"/>
        <end position="547"/>
    </location>
</feature>
<feature type="region of interest" description="Disordered" evidence="2">
    <location>
        <begin position="525"/>
        <end position="547"/>
    </location>
</feature>
<feature type="compositionally biased region" description="Gly residues" evidence="2">
    <location>
        <begin position="533"/>
        <end position="547"/>
    </location>
</feature>
<feature type="binding site" evidence="1">
    <location>
        <begin position="30"/>
        <end position="33"/>
    </location>
    <ligand>
        <name>ATP</name>
        <dbReference type="ChEBI" id="CHEBI:30616"/>
    </ligand>
</feature>
<feature type="binding site" evidence="1">
    <location>
        <position position="51"/>
    </location>
    <ligand>
        <name>ATP</name>
        <dbReference type="ChEBI" id="CHEBI:30616"/>
    </ligand>
</feature>
<feature type="binding site" evidence="1">
    <location>
        <begin position="87"/>
        <end position="91"/>
    </location>
    <ligand>
        <name>ATP</name>
        <dbReference type="ChEBI" id="CHEBI:30616"/>
    </ligand>
</feature>
<feature type="binding site" evidence="1">
    <location>
        <position position="415"/>
    </location>
    <ligand>
        <name>ATP</name>
        <dbReference type="ChEBI" id="CHEBI:30616"/>
    </ligand>
</feature>
<feature type="binding site" evidence="1">
    <location>
        <position position="496"/>
    </location>
    <ligand>
        <name>ATP</name>
        <dbReference type="ChEBI" id="CHEBI:30616"/>
    </ligand>
</feature>
<keyword id="KW-0067">ATP-binding</keyword>
<keyword id="KW-0143">Chaperone</keyword>
<keyword id="KW-0963">Cytoplasm</keyword>
<keyword id="KW-0413">Isomerase</keyword>
<keyword id="KW-0547">Nucleotide-binding</keyword>
<protein>
    <recommendedName>
        <fullName evidence="1">Chaperonin GroEL</fullName>
        <ecNumber evidence="1">5.6.1.7</ecNumber>
    </recommendedName>
    <alternativeName>
        <fullName evidence="1">60 kDa chaperonin</fullName>
    </alternativeName>
    <alternativeName>
        <fullName evidence="1">Chaperonin-60</fullName>
        <shortName evidence="1">Cpn60</shortName>
    </alternativeName>
</protein>
<reference key="1">
    <citation type="submission" date="2007-02" db="EMBL/GenBank/DDBJ databases">
        <title>Complete sequence of chromosome 1 of Rhodobacter sphaeroides ATCC 17029.</title>
        <authorList>
            <person name="Copeland A."/>
            <person name="Lucas S."/>
            <person name="Lapidus A."/>
            <person name="Barry K."/>
            <person name="Detter J.C."/>
            <person name="Glavina del Rio T."/>
            <person name="Hammon N."/>
            <person name="Israni S."/>
            <person name="Dalin E."/>
            <person name="Tice H."/>
            <person name="Pitluck S."/>
            <person name="Kiss H."/>
            <person name="Brettin T."/>
            <person name="Bruce D."/>
            <person name="Han C."/>
            <person name="Tapia R."/>
            <person name="Gilna P."/>
            <person name="Schmutz J."/>
            <person name="Larimer F."/>
            <person name="Land M."/>
            <person name="Hauser L."/>
            <person name="Kyrpides N."/>
            <person name="Mikhailova N."/>
            <person name="Richardson P."/>
            <person name="Mackenzie C."/>
            <person name="Choudhary M."/>
            <person name="Donohue T.J."/>
            <person name="Kaplan S."/>
        </authorList>
    </citation>
    <scope>NUCLEOTIDE SEQUENCE [LARGE SCALE GENOMIC DNA]</scope>
    <source>
        <strain>ATCC 17029 / ATH 2.4.9</strain>
    </source>
</reference>
<organism>
    <name type="scientific">Cereibacter sphaeroides (strain ATCC 17029 / ATH 2.4.9)</name>
    <name type="common">Rhodobacter sphaeroides</name>
    <dbReference type="NCBI Taxonomy" id="349101"/>
    <lineage>
        <taxon>Bacteria</taxon>
        <taxon>Pseudomonadati</taxon>
        <taxon>Pseudomonadota</taxon>
        <taxon>Alphaproteobacteria</taxon>
        <taxon>Rhodobacterales</taxon>
        <taxon>Paracoccaceae</taxon>
        <taxon>Cereibacter</taxon>
    </lineage>
</organism>
<gene>
    <name evidence="1" type="primary">groEL</name>
    <name evidence="1" type="synonym">groL</name>
    <name type="ordered locus">Rsph17029_0985</name>
</gene>
<dbReference type="EC" id="5.6.1.7" evidence="1"/>
<dbReference type="EMBL" id="CP000577">
    <property type="protein sequence ID" value="ABN76096.1"/>
    <property type="molecule type" value="Genomic_DNA"/>
</dbReference>
<dbReference type="RefSeq" id="WP_011840728.1">
    <property type="nucleotide sequence ID" value="NC_009049.1"/>
</dbReference>
<dbReference type="SMR" id="A3PID0"/>
<dbReference type="KEGG" id="rsh:Rsph17029_0985"/>
<dbReference type="HOGENOM" id="CLU_016503_3_0_5"/>
<dbReference type="GO" id="GO:0005737">
    <property type="term" value="C:cytoplasm"/>
    <property type="evidence" value="ECO:0007669"/>
    <property type="project" value="UniProtKB-SubCell"/>
</dbReference>
<dbReference type="GO" id="GO:0005524">
    <property type="term" value="F:ATP binding"/>
    <property type="evidence" value="ECO:0007669"/>
    <property type="project" value="UniProtKB-UniRule"/>
</dbReference>
<dbReference type="GO" id="GO:0140662">
    <property type="term" value="F:ATP-dependent protein folding chaperone"/>
    <property type="evidence" value="ECO:0007669"/>
    <property type="project" value="InterPro"/>
</dbReference>
<dbReference type="GO" id="GO:0016853">
    <property type="term" value="F:isomerase activity"/>
    <property type="evidence" value="ECO:0007669"/>
    <property type="project" value="UniProtKB-KW"/>
</dbReference>
<dbReference type="GO" id="GO:0051082">
    <property type="term" value="F:unfolded protein binding"/>
    <property type="evidence" value="ECO:0007669"/>
    <property type="project" value="UniProtKB-UniRule"/>
</dbReference>
<dbReference type="GO" id="GO:0042026">
    <property type="term" value="P:protein refolding"/>
    <property type="evidence" value="ECO:0007669"/>
    <property type="project" value="UniProtKB-UniRule"/>
</dbReference>
<dbReference type="CDD" id="cd03344">
    <property type="entry name" value="GroEL"/>
    <property type="match status" value="1"/>
</dbReference>
<dbReference type="FunFam" id="1.10.560.10:FF:000001">
    <property type="entry name" value="60 kDa chaperonin"/>
    <property type="match status" value="1"/>
</dbReference>
<dbReference type="FunFam" id="3.50.7.10:FF:000001">
    <property type="entry name" value="60 kDa chaperonin"/>
    <property type="match status" value="1"/>
</dbReference>
<dbReference type="Gene3D" id="3.50.7.10">
    <property type="entry name" value="GroEL"/>
    <property type="match status" value="1"/>
</dbReference>
<dbReference type="Gene3D" id="1.10.560.10">
    <property type="entry name" value="GroEL-like equatorial domain"/>
    <property type="match status" value="1"/>
</dbReference>
<dbReference type="Gene3D" id="3.30.260.10">
    <property type="entry name" value="TCP-1-like chaperonin intermediate domain"/>
    <property type="match status" value="1"/>
</dbReference>
<dbReference type="HAMAP" id="MF_00600">
    <property type="entry name" value="CH60"/>
    <property type="match status" value="1"/>
</dbReference>
<dbReference type="InterPro" id="IPR018370">
    <property type="entry name" value="Chaperonin_Cpn60_CS"/>
</dbReference>
<dbReference type="InterPro" id="IPR001844">
    <property type="entry name" value="Cpn60/GroEL"/>
</dbReference>
<dbReference type="InterPro" id="IPR002423">
    <property type="entry name" value="Cpn60/GroEL/TCP-1"/>
</dbReference>
<dbReference type="InterPro" id="IPR027409">
    <property type="entry name" value="GroEL-like_apical_dom_sf"/>
</dbReference>
<dbReference type="InterPro" id="IPR027413">
    <property type="entry name" value="GROEL-like_equatorial_sf"/>
</dbReference>
<dbReference type="InterPro" id="IPR027410">
    <property type="entry name" value="TCP-1-like_intermed_sf"/>
</dbReference>
<dbReference type="NCBIfam" id="TIGR02348">
    <property type="entry name" value="GroEL"/>
    <property type="match status" value="1"/>
</dbReference>
<dbReference type="NCBIfam" id="NF000592">
    <property type="entry name" value="PRK00013.1"/>
    <property type="match status" value="1"/>
</dbReference>
<dbReference type="NCBIfam" id="NF009487">
    <property type="entry name" value="PRK12849.1"/>
    <property type="match status" value="1"/>
</dbReference>
<dbReference type="NCBIfam" id="NF009488">
    <property type="entry name" value="PRK12850.1"/>
    <property type="match status" value="1"/>
</dbReference>
<dbReference type="NCBIfam" id="NF009489">
    <property type="entry name" value="PRK12851.1"/>
    <property type="match status" value="1"/>
</dbReference>
<dbReference type="PANTHER" id="PTHR45633">
    <property type="entry name" value="60 KDA HEAT SHOCK PROTEIN, MITOCHONDRIAL"/>
    <property type="match status" value="1"/>
</dbReference>
<dbReference type="Pfam" id="PF00118">
    <property type="entry name" value="Cpn60_TCP1"/>
    <property type="match status" value="1"/>
</dbReference>
<dbReference type="PRINTS" id="PR00298">
    <property type="entry name" value="CHAPERONIN60"/>
</dbReference>
<dbReference type="SUPFAM" id="SSF52029">
    <property type="entry name" value="GroEL apical domain-like"/>
    <property type="match status" value="1"/>
</dbReference>
<dbReference type="SUPFAM" id="SSF48592">
    <property type="entry name" value="GroEL equatorial domain-like"/>
    <property type="match status" value="1"/>
</dbReference>
<dbReference type="SUPFAM" id="SSF54849">
    <property type="entry name" value="GroEL-intermediate domain like"/>
    <property type="match status" value="1"/>
</dbReference>
<dbReference type="PROSITE" id="PS00296">
    <property type="entry name" value="CHAPERONINS_CPN60"/>
    <property type="match status" value="1"/>
</dbReference>
<evidence type="ECO:0000255" key="1">
    <source>
        <dbReference type="HAMAP-Rule" id="MF_00600"/>
    </source>
</evidence>
<evidence type="ECO:0000256" key="2">
    <source>
        <dbReference type="SAM" id="MobiDB-lite"/>
    </source>
</evidence>
<sequence>MAAKDVKFDTDARDRMLRGVNILADAVKVTLGPKGRNVVIDKSFGAPRITKDGVSVAKEIELSDKFENMGAQMVKEVASRTNDEAGDGTTTATVLAQAIIKEGLKAVAAGMNPMDLKRGIDLATSKVVEAIKAAARPVNDSHEVAQVGTISANGEAQIGRFIAEAMQKVGNEGVITVEENKGLETEVEVVEGMQFDRGYLSPYFVTNADKMTAELDDVYILLHEKKLSSLQPMVPLLEAVIQSQKPLLIIAEDVEGEALATLVVNKLRGGLKIAAVKAPGFGDRRKAMLQDIAILTGGQVISEDLGMKLENVTIDMLGRAKKISINKDNTTIVDGNGDKAEIDARVAQIRNQIEETSSDYDREKLQERVAKLAGGVAVIRVGGMTEVEVKERKDRVDDALNATRAAVQEGIVVGGGVALIQGGKALDGLTGENPDQNAGITIVRRALEAPLRQIAQNAGVDGSVVAGKVRESNEKSFGFNAQTEEYGDMFKFGVIDPAKVVRTALEDAASVASLLITTEAMIADKPEPKSPAGGPGMGGMGGMDGMM</sequence>
<name>CH60_CERS1</name>
<comment type="function">
    <text evidence="1">Together with its co-chaperonin GroES, plays an essential role in assisting protein folding. The GroEL-GroES system forms a nano-cage that allows encapsulation of the non-native substrate proteins and provides a physical environment optimized to promote and accelerate protein folding.</text>
</comment>
<comment type="catalytic activity">
    <reaction evidence="1">
        <text>ATP + H2O + a folded polypeptide = ADP + phosphate + an unfolded polypeptide.</text>
        <dbReference type="EC" id="5.6.1.7"/>
    </reaction>
</comment>
<comment type="subunit">
    <text evidence="1">Forms a cylinder of 14 subunits composed of two heptameric rings stacked back-to-back. Interacts with the co-chaperonin GroES.</text>
</comment>
<comment type="subcellular location">
    <subcellularLocation>
        <location evidence="1">Cytoplasm</location>
    </subcellularLocation>
</comment>
<comment type="similarity">
    <text evidence="1">Belongs to the chaperonin (HSP60) family.</text>
</comment>
<proteinExistence type="inferred from homology"/>